<organism>
    <name type="scientific">Mycobacterium tuberculosis (strain ATCC 25618 / H37Rv)</name>
    <dbReference type="NCBI Taxonomy" id="83332"/>
    <lineage>
        <taxon>Bacteria</taxon>
        <taxon>Bacillati</taxon>
        <taxon>Actinomycetota</taxon>
        <taxon>Actinomycetes</taxon>
        <taxon>Mycobacteriales</taxon>
        <taxon>Mycobacteriaceae</taxon>
        <taxon>Mycobacterium</taxon>
        <taxon>Mycobacterium tuberculosis complex</taxon>
    </lineage>
</organism>
<dbReference type="EMBL" id="AL123456">
    <property type="protein sequence ID" value="CCP45700.1"/>
    <property type="molecule type" value="Genomic_DNA"/>
</dbReference>
<dbReference type="PIR" id="E70926">
    <property type="entry name" value="E70926"/>
</dbReference>
<dbReference type="RefSeq" id="NP_217414.1">
    <property type="nucleotide sequence ID" value="NC_000962.3"/>
</dbReference>
<dbReference type="RefSeq" id="WP_003414702.1">
    <property type="nucleotide sequence ID" value="NZ_NVQJ01000006.1"/>
</dbReference>
<dbReference type="SMR" id="P9WFM9"/>
<dbReference type="FunCoup" id="P9WFM9">
    <property type="interactions" value="18"/>
</dbReference>
<dbReference type="STRING" id="83332.Rv2898c"/>
<dbReference type="PaxDb" id="83332-Rv2898c"/>
<dbReference type="DNASU" id="888507"/>
<dbReference type="GeneID" id="888507"/>
<dbReference type="KEGG" id="mtu:Rv2898c"/>
<dbReference type="KEGG" id="mtv:RVBD_2898c"/>
<dbReference type="TubercuList" id="Rv2898c"/>
<dbReference type="eggNOG" id="COG0792">
    <property type="taxonomic scope" value="Bacteria"/>
</dbReference>
<dbReference type="InParanoid" id="P9WFM9"/>
<dbReference type="OrthoDB" id="9794876at2"/>
<dbReference type="PhylomeDB" id="P9WFM9"/>
<dbReference type="Proteomes" id="UP000001584">
    <property type="component" value="Chromosome"/>
</dbReference>
<dbReference type="GO" id="GO:0003676">
    <property type="term" value="F:nucleic acid binding"/>
    <property type="evidence" value="ECO:0007669"/>
    <property type="project" value="InterPro"/>
</dbReference>
<dbReference type="CDD" id="cd20736">
    <property type="entry name" value="PoNe_Nuclease"/>
    <property type="match status" value="1"/>
</dbReference>
<dbReference type="Gene3D" id="3.40.1350.10">
    <property type="match status" value="1"/>
</dbReference>
<dbReference type="HAMAP" id="MF_00048">
    <property type="entry name" value="UPF0102"/>
    <property type="match status" value="1"/>
</dbReference>
<dbReference type="InterPro" id="IPR011335">
    <property type="entry name" value="Restrct_endonuc-II-like"/>
</dbReference>
<dbReference type="InterPro" id="IPR011856">
    <property type="entry name" value="tRNA_endonuc-like_dom_sf"/>
</dbReference>
<dbReference type="InterPro" id="IPR003509">
    <property type="entry name" value="UPF0102_YraN-like"/>
</dbReference>
<dbReference type="NCBIfam" id="NF009150">
    <property type="entry name" value="PRK12497.1-3"/>
    <property type="match status" value="1"/>
</dbReference>
<dbReference type="NCBIfam" id="NF009153">
    <property type="entry name" value="PRK12497.3-1"/>
    <property type="match status" value="1"/>
</dbReference>
<dbReference type="NCBIfam" id="NF009154">
    <property type="entry name" value="PRK12497.3-3"/>
    <property type="match status" value="1"/>
</dbReference>
<dbReference type="NCBIfam" id="TIGR00252">
    <property type="entry name" value="YraN family protein"/>
    <property type="match status" value="1"/>
</dbReference>
<dbReference type="PANTHER" id="PTHR34039">
    <property type="entry name" value="UPF0102 PROTEIN YRAN"/>
    <property type="match status" value="1"/>
</dbReference>
<dbReference type="PANTHER" id="PTHR34039:SF1">
    <property type="entry name" value="UPF0102 PROTEIN YRAN"/>
    <property type="match status" value="1"/>
</dbReference>
<dbReference type="Pfam" id="PF02021">
    <property type="entry name" value="UPF0102"/>
    <property type="match status" value="1"/>
</dbReference>
<dbReference type="SUPFAM" id="SSF52980">
    <property type="entry name" value="Restriction endonuclease-like"/>
    <property type="match status" value="1"/>
</dbReference>
<proteinExistence type="inferred from homology"/>
<reference key="1">
    <citation type="journal article" date="1998" name="Nature">
        <title>Deciphering the biology of Mycobacterium tuberculosis from the complete genome sequence.</title>
        <authorList>
            <person name="Cole S.T."/>
            <person name="Brosch R."/>
            <person name="Parkhill J."/>
            <person name="Garnier T."/>
            <person name="Churcher C.M."/>
            <person name="Harris D.E."/>
            <person name="Gordon S.V."/>
            <person name="Eiglmeier K."/>
            <person name="Gas S."/>
            <person name="Barry C.E. III"/>
            <person name="Tekaia F."/>
            <person name="Badcock K."/>
            <person name="Basham D."/>
            <person name="Brown D."/>
            <person name="Chillingworth T."/>
            <person name="Connor R."/>
            <person name="Davies R.M."/>
            <person name="Devlin K."/>
            <person name="Feltwell T."/>
            <person name="Gentles S."/>
            <person name="Hamlin N."/>
            <person name="Holroyd S."/>
            <person name="Hornsby T."/>
            <person name="Jagels K."/>
            <person name="Krogh A."/>
            <person name="McLean J."/>
            <person name="Moule S."/>
            <person name="Murphy L.D."/>
            <person name="Oliver S."/>
            <person name="Osborne J."/>
            <person name="Quail M.A."/>
            <person name="Rajandream M.A."/>
            <person name="Rogers J."/>
            <person name="Rutter S."/>
            <person name="Seeger K."/>
            <person name="Skelton S."/>
            <person name="Squares S."/>
            <person name="Squares R."/>
            <person name="Sulston J.E."/>
            <person name="Taylor K."/>
            <person name="Whitehead S."/>
            <person name="Barrell B.G."/>
        </authorList>
    </citation>
    <scope>NUCLEOTIDE SEQUENCE [LARGE SCALE GENOMIC DNA]</scope>
    <source>
        <strain>ATCC 25618 / H37Rv</strain>
    </source>
</reference>
<name>Y2898_MYCTU</name>
<evidence type="ECO:0000305" key="1"/>
<comment type="similarity">
    <text evidence="1">Belongs to the UPF0102 family.</text>
</comment>
<protein>
    <recommendedName>
        <fullName>UPF0102 protein Rv2898c</fullName>
    </recommendedName>
</protein>
<gene>
    <name type="ordered locus">Rv2898c</name>
    <name type="ORF">MTCY274.29c</name>
</gene>
<feature type="chain" id="PRO_0000167363" description="UPF0102 protein Rv2898c">
    <location>
        <begin position="1"/>
        <end position="128"/>
    </location>
</feature>
<accession>P9WFM9</accession>
<accession>L0TAZ0</accession>
<accession>P67230</accession>
<accession>Q10819</accession>
<sequence length="128" mass="14224">MTTLKTMTRVQLGAMGEALAVDYLTSMGLRILNRNWRCRYGELDVIACDAATRTVVFVEVKTRTGDGYGGLAHAVTERKVRRLRRLAGLWLADQEERWAAVRIDVIGVRVGPKNSGRTPELTHLQGIG</sequence>
<keyword id="KW-1185">Reference proteome</keyword>